<protein>
    <recommendedName>
        <fullName evidence="1">Histidine--tRNA ligase</fullName>
        <ecNumber evidence="1">6.1.1.21</ecNumber>
    </recommendedName>
    <alternativeName>
        <fullName evidence="1">Histidyl-tRNA synthetase</fullName>
        <shortName evidence="1">HisRS</shortName>
    </alternativeName>
</protein>
<accession>B5Z0Y3</accession>
<proteinExistence type="inferred from homology"/>
<feature type="chain" id="PRO_1000095551" description="Histidine--tRNA ligase">
    <location>
        <begin position="1"/>
        <end position="424"/>
    </location>
</feature>
<reference key="1">
    <citation type="journal article" date="2011" name="Proc. Natl. Acad. Sci. U.S.A.">
        <title>Genomic anatomy of Escherichia coli O157:H7 outbreaks.</title>
        <authorList>
            <person name="Eppinger M."/>
            <person name="Mammel M.K."/>
            <person name="Leclerc J.E."/>
            <person name="Ravel J."/>
            <person name="Cebula T.A."/>
        </authorList>
    </citation>
    <scope>NUCLEOTIDE SEQUENCE [LARGE SCALE GENOMIC DNA]</scope>
    <source>
        <strain>EC4115 / EHEC</strain>
    </source>
</reference>
<keyword id="KW-0030">Aminoacyl-tRNA synthetase</keyword>
<keyword id="KW-0067">ATP-binding</keyword>
<keyword id="KW-0963">Cytoplasm</keyword>
<keyword id="KW-0436">Ligase</keyword>
<keyword id="KW-0547">Nucleotide-binding</keyword>
<keyword id="KW-0648">Protein biosynthesis</keyword>
<comment type="catalytic activity">
    <reaction evidence="1">
        <text>tRNA(His) + L-histidine + ATP = L-histidyl-tRNA(His) + AMP + diphosphate + H(+)</text>
        <dbReference type="Rhea" id="RHEA:17313"/>
        <dbReference type="Rhea" id="RHEA-COMP:9665"/>
        <dbReference type="Rhea" id="RHEA-COMP:9689"/>
        <dbReference type="ChEBI" id="CHEBI:15378"/>
        <dbReference type="ChEBI" id="CHEBI:30616"/>
        <dbReference type="ChEBI" id="CHEBI:33019"/>
        <dbReference type="ChEBI" id="CHEBI:57595"/>
        <dbReference type="ChEBI" id="CHEBI:78442"/>
        <dbReference type="ChEBI" id="CHEBI:78527"/>
        <dbReference type="ChEBI" id="CHEBI:456215"/>
        <dbReference type="EC" id="6.1.1.21"/>
    </reaction>
</comment>
<comment type="subunit">
    <text evidence="1">Homodimer.</text>
</comment>
<comment type="subcellular location">
    <subcellularLocation>
        <location evidence="1">Cytoplasm</location>
    </subcellularLocation>
</comment>
<comment type="similarity">
    <text evidence="1">Belongs to the class-II aminoacyl-tRNA synthetase family.</text>
</comment>
<gene>
    <name evidence="1" type="primary">hisS</name>
    <name type="ordered locus">ECH74115_3738</name>
</gene>
<organism>
    <name type="scientific">Escherichia coli O157:H7 (strain EC4115 / EHEC)</name>
    <dbReference type="NCBI Taxonomy" id="444450"/>
    <lineage>
        <taxon>Bacteria</taxon>
        <taxon>Pseudomonadati</taxon>
        <taxon>Pseudomonadota</taxon>
        <taxon>Gammaproteobacteria</taxon>
        <taxon>Enterobacterales</taxon>
        <taxon>Enterobacteriaceae</taxon>
        <taxon>Escherichia</taxon>
    </lineage>
</organism>
<name>SYH_ECO5E</name>
<sequence length="424" mass="47029">MAKNIQAIRGMNDYLPGETAIWQRIEGTLKNVLGSYGYSEIRLPIVEQTPLFKRAIGEVTDVVEKEMYTFEDRNGDSLTLRPEGTAGCVRAGIEHGLLYNQEQRLWYIGPMFRHERPQKGRYRQFHQLGCEVFGLQGPDIDAELIMLTARWWRALGISEHVTLELNSIGSLEARANYRDALVAFLEQHKEKLDEDCKRRMYTNPLRVLDSKNPEVQALLNDAPALGDYLDEESREHFAGLCKLLESAGIAYTVNQRLVRGLDYYNRTVFEWVTNSLGSQGTVCAGGRYDGLVEQLGGRATPAVGFAMGLERLVLLVQAVNPEFKADPVVDIYLVASGADTQSAAMALAERLRDELPGVKLMTNHGGGNFKKQFARADKWGARVAVVLGESEVANGTAVVKDLRSGEQTAVAQDSVAAHLRTLLG</sequence>
<dbReference type="EC" id="6.1.1.21" evidence="1"/>
<dbReference type="EMBL" id="CP001164">
    <property type="protein sequence ID" value="ACI36920.1"/>
    <property type="molecule type" value="Genomic_DNA"/>
</dbReference>
<dbReference type="RefSeq" id="WP_001107167.1">
    <property type="nucleotide sequence ID" value="NC_011353.1"/>
</dbReference>
<dbReference type="SMR" id="B5Z0Y3"/>
<dbReference type="GeneID" id="75206207"/>
<dbReference type="KEGG" id="ecf:ECH74115_3738"/>
<dbReference type="HOGENOM" id="CLU_025113_1_1_6"/>
<dbReference type="GO" id="GO:0005737">
    <property type="term" value="C:cytoplasm"/>
    <property type="evidence" value="ECO:0007669"/>
    <property type="project" value="UniProtKB-SubCell"/>
</dbReference>
<dbReference type="GO" id="GO:0005524">
    <property type="term" value="F:ATP binding"/>
    <property type="evidence" value="ECO:0007669"/>
    <property type="project" value="UniProtKB-UniRule"/>
</dbReference>
<dbReference type="GO" id="GO:0004821">
    <property type="term" value="F:histidine-tRNA ligase activity"/>
    <property type="evidence" value="ECO:0007669"/>
    <property type="project" value="UniProtKB-UniRule"/>
</dbReference>
<dbReference type="GO" id="GO:0006427">
    <property type="term" value="P:histidyl-tRNA aminoacylation"/>
    <property type="evidence" value="ECO:0007669"/>
    <property type="project" value="UniProtKB-UniRule"/>
</dbReference>
<dbReference type="CDD" id="cd00773">
    <property type="entry name" value="HisRS-like_core"/>
    <property type="match status" value="1"/>
</dbReference>
<dbReference type="CDD" id="cd00859">
    <property type="entry name" value="HisRS_anticodon"/>
    <property type="match status" value="1"/>
</dbReference>
<dbReference type="FunFam" id="3.30.930.10:FF:000005">
    <property type="entry name" value="Histidine--tRNA ligase"/>
    <property type="match status" value="1"/>
</dbReference>
<dbReference type="FunFam" id="3.40.50.800:FF:000007">
    <property type="entry name" value="Histidine--tRNA ligase"/>
    <property type="match status" value="1"/>
</dbReference>
<dbReference type="Gene3D" id="3.40.50.800">
    <property type="entry name" value="Anticodon-binding domain"/>
    <property type="match status" value="1"/>
</dbReference>
<dbReference type="Gene3D" id="3.30.930.10">
    <property type="entry name" value="Bira Bifunctional Protein, Domain 2"/>
    <property type="match status" value="1"/>
</dbReference>
<dbReference type="HAMAP" id="MF_00127">
    <property type="entry name" value="His_tRNA_synth"/>
    <property type="match status" value="1"/>
</dbReference>
<dbReference type="InterPro" id="IPR006195">
    <property type="entry name" value="aa-tRNA-synth_II"/>
</dbReference>
<dbReference type="InterPro" id="IPR045864">
    <property type="entry name" value="aa-tRNA-synth_II/BPL/LPL"/>
</dbReference>
<dbReference type="InterPro" id="IPR004154">
    <property type="entry name" value="Anticodon-bd"/>
</dbReference>
<dbReference type="InterPro" id="IPR036621">
    <property type="entry name" value="Anticodon-bd_dom_sf"/>
</dbReference>
<dbReference type="InterPro" id="IPR015807">
    <property type="entry name" value="His-tRNA-ligase"/>
</dbReference>
<dbReference type="InterPro" id="IPR041715">
    <property type="entry name" value="HisRS-like_core"/>
</dbReference>
<dbReference type="InterPro" id="IPR004516">
    <property type="entry name" value="HisRS/HisZ"/>
</dbReference>
<dbReference type="InterPro" id="IPR033656">
    <property type="entry name" value="HisRS_anticodon"/>
</dbReference>
<dbReference type="NCBIfam" id="TIGR00442">
    <property type="entry name" value="hisS"/>
    <property type="match status" value="1"/>
</dbReference>
<dbReference type="PANTHER" id="PTHR43707:SF1">
    <property type="entry name" value="HISTIDINE--TRNA LIGASE, MITOCHONDRIAL-RELATED"/>
    <property type="match status" value="1"/>
</dbReference>
<dbReference type="PANTHER" id="PTHR43707">
    <property type="entry name" value="HISTIDYL-TRNA SYNTHETASE"/>
    <property type="match status" value="1"/>
</dbReference>
<dbReference type="Pfam" id="PF03129">
    <property type="entry name" value="HGTP_anticodon"/>
    <property type="match status" value="1"/>
</dbReference>
<dbReference type="Pfam" id="PF13393">
    <property type="entry name" value="tRNA-synt_His"/>
    <property type="match status" value="1"/>
</dbReference>
<dbReference type="PIRSF" id="PIRSF001549">
    <property type="entry name" value="His-tRNA_synth"/>
    <property type="match status" value="1"/>
</dbReference>
<dbReference type="SUPFAM" id="SSF52954">
    <property type="entry name" value="Class II aaRS ABD-related"/>
    <property type="match status" value="1"/>
</dbReference>
<dbReference type="SUPFAM" id="SSF55681">
    <property type="entry name" value="Class II aaRS and biotin synthetases"/>
    <property type="match status" value="1"/>
</dbReference>
<dbReference type="PROSITE" id="PS50862">
    <property type="entry name" value="AA_TRNA_LIGASE_II"/>
    <property type="match status" value="1"/>
</dbReference>
<evidence type="ECO:0000255" key="1">
    <source>
        <dbReference type="HAMAP-Rule" id="MF_00127"/>
    </source>
</evidence>